<gene>
    <name type="primary">xerC</name>
    <name type="ordered locus">HI_0676</name>
</gene>
<evidence type="ECO:0000250" key="1"/>
<evidence type="ECO:0000255" key="2">
    <source>
        <dbReference type="PROSITE-ProRule" id="PRU01246"/>
    </source>
</evidence>
<evidence type="ECO:0000255" key="3">
    <source>
        <dbReference type="PROSITE-ProRule" id="PRU01248"/>
    </source>
</evidence>
<evidence type="ECO:0000269" key="4">
    <source>
    </source>
</evidence>
<evidence type="ECO:0000305" key="5"/>
<name>XERC_HAEIN</name>
<organism>
    <name type="scientific">Haemophilus influenzae (strain ATCC 51907 / DSM 11121 / KW20 / Rd)</name>
    <dbReference type="NCBI Taxonomy" id="71421"/>
    <lineage>
        <taxon>Bacteria</taxon>
        <taxon>Pseudomonadati</taxon>
        <taxon>Pseudomonadota</taxon>
        <taxon>Gammaproteobacteria</taxon>
        <taxon>Pasteurellales</taxon>
        <taxon>Pasteurellaceae</taxon>
        <taxon>Haemophilus</taxon>
    </lineage>
</organism>
<keyword id="KW-0131">Cell cycle</keyword>
<keyword id="KW-0132">Cell division</keyword>
<keyword id="KW-0159">Chromosome partition</keyword>
<keyword id="KW-0963">Cytoplasm</keyword>
<keyword id="KW-0229">DNA integration</keyword>
<keyword id="KW-0233">DNA recombination</keyword>
<keyword id="KW-0238">DNA-binding</keyword>
<keyword id="KW-1185">Reference proteome</keyword>
<reference key="1">
    <citation type="journal article" date="1995" name="Science">
        <title>Whole-genome random sequencing and assembly of Haemophilus influenzae Rd.</title>
        <authorList>
            <person name="Fleischmann R.D."/>
            <person name="Adams M.D."/>
            <person name="White O."/>
            <person name="Clayton R.A."/>
            <person name="Kirkness E.F."/>
            <person name="Kerlavage A.R."/>
            <person name="Bult C.J."/>
            <person name="Tomb J.-F."/>
            <person name="Dougherty B.A."/>
            <person name="Merrick J.M."/>
            <person name="McKenney K."/>
            <person name="Sutton G.G."/>
            <person name="FitzHugh W."/>
            <person name="Fields C.A."/>
            <person name="Gocayne J.D."/>
            <person name="Scott J.D."/>
            <person name="Shirley R."/>
            <person name="Liu L.-I."/>
            <person name="Glodek A."/>
            <person name="Kelley J.M."/>
            <person name="Weidman J.F."/>
            <person name="Phillips C.A."/>
            <person name="Spriggs T."/>
            <person name="Hedblom E."/>
            <person name="Cotton M.D."/>
            <person name="Utterback T.R."/>
            <person name="Hanna M.C."/>
            <person name="Nguyen D.T."/>
            <person name="Saudek D.M."/>
            <person name="Brandon R.C."/>
            <person name="Fine L.D."/>
            <person name="Fritchman J.L."/>
            <person name="Fuhrmann J.L."/>
            <person name="Geoghagen N.S.M."/>
            <person name="Gnehm C.L."/>
            <person name="McDonald L.A."/>
            <person name="Small K.V."/>
            <person name="Fraser C.M."/>
            <person name="Smith H.O."/>
            <person name="Venter J.C."/>
        </authorList>
    </citation>
    <scope>NUCLEOTIDE SEQUENCE [LARGE SCALE GENOMIC DNA]</scope>
    <source>
        <strain>ATCC 51907 / DSM 11121 / KW20 / Rd</strain>
    </source>
</reference>
<reference key="2">
    <citation type="journal article" date="1999" name="Mol. Microbiol.">
        <title>Site-specific recombination at dif by Haemophilus influenzae XerC.</title>
        <authorList>
            <person name="Neilson L."/>
            <person name="Blakely G."/>
            <person name="Sherratt D.J."/>
        </authorList>
    </citation>
    <scope>CHARACTERIZATION</scope>
    <scope>FUNCTION</scope>
    <scope>MUTAGENESIS OF TYR-272</scope>
</reference>
<comment type="function">
    <text evidence="4">Site-specific tyrosine recombinase, which acts by catalyzing the cutting and rejoining of the recombining DNA molecules. The XerC-XerD complex is essential to convert dimers of the bacterial chromosome into monomers to permit their segregation at cell division. It also contributes to the segregational stability of plasmids.</text>
</comment>
<comment type="subunit">
    <text evidence="1">Forms a cyclic heterotetrameric complex composed of two molecules of XerC and two molecules of XerD.</text>
</comment>
<comment type="subcellular location">
    <subcellularLocation>
        <location>Cytoplasm</location>
    </subcellularLocation>
</comment>
<comment type="similarity">
    <text evidence="5">Belongs to the 'phage' integrase family. XerC subfamily.</text>
</comment>
<protein>
    <recommendedName>
        <fullName>Tyrosine recombinase XerC</fullName>
    </recommendedName>
</protein>
<sequence>MLTALNRYWDYLRIERQMSPHTITNYQHQLDATIKILAQQDIHSWTQVTPSVVRFILAESKKQGLKEKSLALRLSALRRFLSFLVQQGELKVNPATGISAPKQGRHLPKNMDGEQVQQLLANDSKEPIDIRDRAILELMYSSGLRLSELQGLDLNSINTRVREVRVIGKGNKERVVPFGRYASHAIQEWLKVRALFNPKDEALFVSQLGNRISHRAIQKRLETWGIRQGLNSHLNPHKLRHSFATHMLEASSDLRAVQELLGHSNLSTTQIYTHLNFQHLAEVYDQAHPRAKRKK</sequence>
<proteinExistence type="evidence at protein level"/>
<feature type="chain" id="PRO_0000095298" description="Tyrosine recombinase XerC">
    <location>
        <begin position="1"/>
        <end position="295"/>
    </location>
</feature>
<feature type="domain" description="Core-binding (CB)" evidence="3">
    <location>
        <begin position="1"/>
        <end position="85"/>
    </location>
</feature>
<feature type="domain" description="Tyr recombinase" evidence="2">
    <location>
        <begin position="106"/>
        <end position="285"/>
    </location>
</feature>
<feature type="active site" evidence="2">
    <location>
        <position position="145"/>
    </location>
</feature>
<feature type="active site" evidence="2">
    <location>
        <position position="169"/>
    </location>
</feature>
<feature type="active site" evidence="2">
    <location>
        <position position="237"/>
    </location>
</feature>
<feature type="active site" evidence="2">
    <location>
        <position position="240"/>
    </location>
</feature>
<feature type="active site" evidence="2">
    <location>
        <position position="263"/>
    </location>
</feature>
<feature type="active site" description="O-(3'-phospho-DNA)-tyrosine intermediate" evidence="2">
    <location>
        <position position="272"/>
    </location>
</feature>
<feature type="mutagenesis site" description="Abolishes DNA cleavage activity." evidence="4">
    <original>Y</original>
    <variation>F</variation>
    <location>
        <position position="272"/>
    </location>
</feature>
<dbReference type="EMBL" id="L42023">
    <property type="protein sequence ID" value="AAC22336.1"/>
    <property type="molecule type" value="Genomic_DNA"/>
</dbReference>
<dbReference type="PIR" id="F64085">
    <property type="entry name" value="F64085"/>
</dbReference>
<dbReference type="RefSeq" id="NP_438836.1">
    <property type="nucleotide sequence ID" value="NC_000907.1"/>
</dbReference>
<dbReference type="SMR" id="P44818"/>
<dbReference type="STRING" id="71421.HI_0676"/>
<dbReference type="EnsemblBacteria" id="AAC22336">
    <property type="protein sequence ID" value="AAC22336"/>
    <property type="gene ID" value="HI_0676"/>
</dbReference>
<dbReference type="KEGG" id="hin:HI_0676"/>
<dbReference type="PATRIC" id="fig|71421.8.peg.706"/>
<dbReference type="eggNOG" id="COG4973">
    <property type="taxonomic scope" value="Bacteria"/>
</dbReference>
<dbReference type="HOGENOM" id="CLU_027562_9_0_6"/>
<dbReference type="OrthoDB" id="9801717at2"/>
<dbReference type="PhylomeDB" id="P44818"/>
<dbReference type="BioCyc" id="HINF71421:G1GJ1-711-MONOMER"/>
<dbReference type="Proteomes" id="UP000000579">
    <property type="component" value="Chromosome"/>
</dbReference>
<dbReference type="GO" id="GO:0005737">
    <property type="term" value="C:cytoplasm"/>
    <property type="evidence" value="ECO:0007669"/>
    <property type="project" value="UniProtKB-SubCell"/>
</dbReference>
<dbReference type="GO" id="GO:0048476">
    <property type="term" value="C:Holliday junction resolvase complex"/>
    <property type="evidence" value="ECO:0000318"/>
    <property type="project" value="GO_Central"/>
</dbReference>
<dbReference type="GO" id="GO:0003677">
    <property type="term" value="F:DNA binding"/>
    <property type="evidence" value="ECO:0000318"/>
    <property type="project" value="GO_Central"/>
</dbReference>
<dbReference type="GO" id="GO:0009037">
    <property type="term" value="F:tyrosine-based site-specific recombinase activity"/>
    <property type="evidence" value="ECO:0000318"/>
    <property type="project" value="GO_Central"/>
</dbReference>
<dbReference type="GO" id="GO:0051301">
    <property type="term" value="P:cell division"/>
    <property type="evidence" value="ECO:0007669"/>
    <property type="project" value="UniProtKB-KW"/>
</dbReference>
<dbReference type="GO" id="GO:0007059">
    <property type="term" value="P:chromosome segregation"/>
    <property type="evidence" value="ECO:0000318"/>
    <property type="project" value="GO_Central"/>
</dbReference>
<dbReference type="GO" id="GO:0006310">
    <property type="term" value="P:DNA recombination"/>
    <property type="evidence" value="ECO:0000318"/>
    <property type="project" value="GO_Central"/>
</dbReference>
<dbReference type="GO" id="GO:0006313">
    <property type="term" value="P:DNA transposition"/>
    <property type="evidence" value="ECO:0007669"/>
    <property type="project" value="UniProtKB-UniRule"/>
</dbReference>
<dbReference type="GO" id="GO:0071139">
    <property type="term" value="P:resolution of DNA recombination intermediates"/>
    <property type="evidence" value="ECO:0000318"/>
    <property type="project" value="GO_Central"/>
</dbReference>
<dbReference type="CDD" id="cd00798">
    <property type="entry name" value="INT_XerDC_C"/>
    <property type="match status" value="1"/>
</dbReference>
<dbReference type="Gene3D" id="1.10.150.130">
    <property type="match status" value="1"/>
</dbReference>
<dbReference type="Gene3D" id="1.10.443.10">
    <property type="entry name" value="Intergrase catalytic core"/>
    <property type="match status" value="1"/>
</dbReference>
<dbReference type="HAMAP" id="MF_01808">
    <property type="entry name" value="Recomb_XerC_XerD"/>
    <property type="match status" value="1"/>
</dbReference>
<dbReference type="InterPro" id="IPR044068">
    <property type="entry name" value="CB"/>
</dbReference>
<dbReference type="InterPro" id="IPR011010">
    <property type="entry name" value="DNA_brk_join_enz"/>
</dbReference>
<dbReference type="InterPro" id="IPR013762">
    <property type="entry name" value="Integrase-like_cat_sf"/>
</dbReference>
<dbReference type="InterPro" id="IPR002104">
    <property type="entry name" value="Integrase_catalytic"/>
</dbReference>
<dbReference type="InterPro" id="IPR010998">
    <property type="entry name" value="Integrase_recombinase_N"/>
</dbReference>
<dbReference type="InterPro" id="IPR004107">
    <property type="entry name" value="Integrase_SAM-like_N"/>
</dbReference>
<dbReference type="InterPro" id="IPR011931">
    <property type="entry name" value="Recomb_XerC"/>
</dbReference>
<dbReference type="InterPro" id="IPR023009">
    <property type="entry name" value="Tyrosine_recombinase_XerC/XerD"/>
</dbReference>
<dbReference type="InterPro" id="IPR050090">
    <property type="entry name" value="Tyrosine_recombinase_XerCD"/>
</dbReference>
<dbReference type="NCBIfam" id="NF001399">
    <property type="entry name" value="PRK00283.1"/>
    <property type="match status" value="1"/>
</dbReference>
<dbReference type="NCBIfam" id="NF040815">
    <property type="entry name" value="recomb_XerA_Arch"/>
    <property type="match status" value="1"/>
</dbReference>
<dbReference type="NCBIfam" id="TIGR02224">
    <property type="entry name" value="recomb_XerC"/>
    <property type="match status" value="1"/>
</dbReference>
<dbReference type="PANTHER" id="PTHR30349">
    <property type="entry name" value="PHAGE INTEGRASE-RELATED"/>
    <property type="match status" value="1"/>
</dbReference>
<dbReference type="PANTHER" id="PTHR30349:SF81">
    <property type="entry name" value="TYROSINE RECOMBINASE XERC"/>
    <property type="match status" value="1"/>
</dbReference>
<dbReference type="Pfam" id="PF02899">
    <property type="entry name" value="Phage_int_SAM_1"/>
    <property type="match status" value="1"/>
</dbReference>
<dbReference type="Pfam" id="PF00589">
    <property type="entry name" value="Phage_integrase"/>
    <property type="match status" value="1"/>
</dbReference>
<dbReference type="SUPFAM" id="SSF56349">
    <property type="entry name" value="DNA breaking-rejoining enzymes"/>
    <property type="match status" value="1"/>
</dbReference>
<dbReference type="SUPFAM" id="SSF47823">
    <property type="entry name" value="lambda integrase-like, N-terminal domain"/>
    <property type="match status" value="1"/>
</dbReference>
<dbReference type="PROSITE" id="PS51900">
    <property type="entry name" value="CB"/>
    <property type="match status" value="1"/>
</dbReference>
<dbReference type="PROSITE" id="PS51898">
    <property type="entry name" value="TYR_RECOMBINASE"/>
    <property type="match status" value="1"/>
</dbReference>
<accession>P44818</accession>